<keyword id="KW-0010">Activator</keyword>
<keyword id="KW-0963">Cytoplasm</keyword>
<keyword id="KW-0238">DNA-binding</keyword>
<keyword id="KW-0276">Fatty acid metabolism</keyword>
<keyword id="KW-0443">Lipid metabolism</keyword>
<keyword id="KW-0678">Repressor</keyword>
<keyword id="KW-0804">Transcription</keyword>
<keyword id="KW-0805">Transcription regulation</keyword>
<sequence>MVIKAQSPAGFAEEYIIESIWNNRFPPGTILPAERELSELIGVTRTTLREVLQRLARDGWLTIQHGKPTKVNNFWETSGLNILETLARLDHESVPQLIDNLLSVRTNISTIFIRTALRQHPDKAQEVLATAHEVADHADAFADLDYNIFRGLAFASGNPIYGLILNGMKGLYTRIGRHYFANPEARSLALGFYHKLSSLCEQGAHDQVYETVRRYGHDSGEIWHRMQKNLPGDLAIQGR</sequence>
<name>FADR_SALPK</name>
<feature type="chain" id="PRO_1000132330" description="Fatty acid metabolism regulator protein">
    <location>
        <begin position="1"/>
        <end position="239"/>
    </location>
</feature>
<feature type="domain" description="HTH gntR-type" evidence="1">
    <location>
        <begin position="6"/>
        <end position="74"/>
    </location>
</feature>
<feature type="DNA-binding region" description="H-T-H motif" evidence="1">
    <location>
        <begin position="34"/>
        <end position="53"/>
    </location>
</feature>
<organism>
    <name type="scientific">Salmonella paratyphi A (strain AKU_12601)</name>
    <dbReference type="NCBI Taxonomy" id="554290"/>
    <lineage>
        <taxon>Bacteria</taxon>
        <taxon>Pseudomonadati</taxon>
        <taxon>Pseudomonadota</taxon>
        <taxon>Gammaproteobacteria</taxon>
        <taxon>Enterobacterales</taxon>
        <taxon>Enterobacteriaceae</taxon>
        <taxon>Salmonella</taxon>
    </lineage>
</organism>
<protein>
    <recommendedName>
        <fullName evidence="1">Fatty acid metabolism regulator protein</fullName>
    </recommendedName>
</protein>
<evidence type="ECO:0000255" key="1">
    <source>
        <dbReference type="HAMAP-Rule" id="MF_00696"/>
    </source>
</evidence>
<dbReference type="EMBL" id="FM200053">
    <property type="protein sequence ID" value="CAR59148.1"/>
    <property type="molecule type" value="Genomic_DNA"/>
</dbReference>
<dbReference type="RefSeq" id="WP_000234826.1">
    <property type="nucleotide sequence ID" value="NC_011147.1"/>
</dbReference>
<dbReference type="SMR" id="B5BI48"/>
<dbReference type="KEGG" id="sek:SSPA0997"/>
<dbReference type="HOGENOM" id="CLU_017584_9_4_6"/>
<dbReference type="Proteomes" id="UP000001869">
    <property type="component" value="Chromosome"/>
</dbReference>
<dbReference type="GO" id="GO:0005737">
    <property type="term" value="C:cytoplasm"/>
    <property type="evidence" value="ECO:0007669"/>
    <property type="project" value="UniProtKB-SubCell"/>
</dbReference>
<dbReference type="GO" id="GO:0003677">
    <property type="term" value="F:DNA binding"/>
    <property type="evidence" value="ECO:0007669"/>
    <property type="project" value="UniProtKB-KW"/>
</dbReference>
<dbReference type="GO" id="GO:0003700">
    <property type="term" value="F:DNA-binding transcription factor activity"/>
    <property type="evidence" value="ECO:0007669"/>
    <property type="project" value="UniProtKB-UniRule"/>
</dbReference>
<dbReference type="GO" id="GO:0000062">
    <property type="term" value="F:fatty-acyl-CoA binding"/>
    <property type="evidence" value="ECO:0007669"/>
    <property type="project" value="InterPro"/>
</dbReference>
<dbReference type="GO" id="GO:0006631">
    <property type="term" value="P:fatty acid metabolic process"/>
    <property type="evidence" value="ECO:0007669"/>
    <property type="project" value="UniProtKB-KW"/>
</dbReference>
<dbReference type="GO" id="GO:0019217">
    <property type="term" value="P:regulation of fatty acid metabolic process"/>
    <property type="evidence" value="ECO:0007669"/>
    <property type="project" value="UniProtKB-UniRule"/>
</dbReference>
<dbReference type="CDD" id="cd07377">
    <property type="entry name" value="WHTH_GntR"/>
    <property type="match status" value="1"/>
</dbReference>
<dbReference type="FunFam" id="1.10.10.10:FF:000036">
    <property type="entry name" value="Fatty acid metabolism regulator protein"/>
    <property type="match status" value="1"/>
</dbReference>
<dbReference type="FunFam" id="1.20.120.530:FF:000003">
    <property type="entry name" value="Fatty acid metabolism regulator protein"/>
    <property type="match status" value="1"/>
</dbReference>
<dbReference type="Gene3D" id="1.20.120.530">
    <property type="entry name" value="GntR ligand-binding domain-like"/>
    <property type="match status" value="1"/>
</dbReference>
<dbReference type="Gene3D" id="1.10.10.10">
    <property type="entry name" value="Winged helix-like DNA-binding domain superfamily/Winged helix DNA-binding domain"/>
    <property type="match status" value="1"/>
</dbReference>
<dbReference type="HAMAP" id="MF_00696">
    <property type="entry name" value="HTH_FadR"/>
    <property type="match status" value="1"/>
</dbReference>
<dbReference type="InterPro" id="IPR014178">
    <property type="entry name" value="FA-response_TF_FadR"/>
</dbReference>
<dbReference type="InterPro" id="IPR028374">
    <property type="entry name" value="FadR_C"/>
</dbReference>
<dbReference type="InterPro" id="IPR008920">
    <property type="entry name" value="TF_FadR/GntR_C"/>
</dbReference>
<dbReference type="InterPro" id="IPR000524">
    <property type="entry name" value="Tscrpt_reg_HTH_GntR"/>
</dbReference>
<dbReference type="InterPro" id="IPR036388">
    <property type="entry name" value="WH-like_DNA-bd_sf"/>
</dbReference>
<dbReference type="InterPro" id="IPR036390">
    <property type="entry name" value="WH_DNA-bd_sf"/>
</dbReference>
<dbReference type="NCBIfam" id="TIGR02812">
    <property type="entry name" value="fadR_gamma"/>
    <property type="match status" value="1"/>
</dbReference>
<dbReference type="NCBIfam" id="NF003444">
    <property type="entry name" value="PRK04984.1"/>
    <property type="match status" value="1"/>
</dbReference>
<dbReference type="PANTHER" id="PTHR43537:SF52">
    <property type="entry name" value="FATTY ACID METABOLISM REGULATOR PROTEIN"/>
    <property type="match status" value="1"/>
</dbReference>
<dbReference type="PANTHER" id="PTHR43537">
    <property type="entry name" value="TRANSCRIPTIONAL REGULATOR, GNTR FAMILY"/>
    <property type="match status" value="1"/>
</dbReference>
<dbReference type="Pfam" id="PF07840">
    <property type="entry name" value="FadR_C"/>
    <property type="match status" value="1"/>
</dbReference>
<dbReference type="Pfam" id="PF00392">
    <property type="entry name" value="GntR"/>
    <property type="match status" value="1"/>
</dbReference>
<dbReference type="PRINTS" id="PR00035">
    <property type="entry name" value="HTHGNTR"/>
</dbReference>
<dbReference type="SMART" id="SM00345">
    <property type="entry name" value="HTH_GNTR"/>
    <property type="match status" value="1"/>
</dbReference>
<dbReference type="SUPFAM" id="SSF48008">
    <property type="entry name" value="GntR ligand-binding domain-like"/>
    <property type="match status" value="1"/>
</dbReference>
<dbReference type="SUPFAM" id="SSF46785">
    <property type="entry name" value="Winged helix' DNA-binding domain"/>
    <property type="match status" value="1"/>
</dbReference>
<dbReference type="PROSITE" id="PS50949">
    <property type="entry name" value="HTH_GNTR"/>
    <property type="match status" value="1"/>
</dbReference>
<reference key="1">
    <citation type="journal article" date="2009" name="BMC Genomics">
        <title>Pseudogene accumulation in the evolutionary histories of Salmonella enterica serovars Paratyphi A and Typhi.</title>
        <authorList>
            <person name="Holt K.E."/>
            <person name="Thomson N.R."/>
            <person name="Wain J."/>
            <person name="Langridge G.C."/>
            <person name="Hasan R."/>
            <person name="Bhutta Z.A."/>
            <person name="Quail M.A."/>
            <person name="Norbertczak H."/>
            <person name="Walker D."/>
            <person name="Simmonds M."/>
            <person name="White B."/>
            <person name="Bason N."/>
            <person name="Mungall K."/>
            <person name="Dougan G."/>
            <person name="Parkhill J."/>
        </authorList>
    </citation>
    <scope>NUCLEOTIDE SEQUENCE [LARGE SCALE GENOMIC DNA]</scope>
    <source>
        <strain>AKU_12601</strain>
    </source>
</reference>
<comment type="function">
    <text evidence="1">Multifunctional regulator of fatty acid metabolism.</text>
</comment>
<comment type="subunit">
    <text evidence="1">Homodimer.</text>
</comment>
<comment type="subcellular location">
    <subcellularLocation>
        <location evidence="1">Cytoplasm</location>
    </subcellularLocation>
</comment>
<gene>
    <name evidence="1" type="primary">fadR</name>
    <name type="ordered locus">SSPA0997</name>
</gene>
<accession>B5BI48</accession>
<proteinExistence type="inferred from homology"/>